<protein>
    <recommendedName>
        <fullName>Uncharacterized protein YjcO</fullName>
    </recommendedName>
</protein>
<reference key="1">
    <citation type="journal article" date="2001" name="Nature">
        <title>Genome sequence of enterohaemorrhagic Escherichia coli O157:H7.</title>
        <authorList>
            <person name="Perna N.T."/>
            <person name="Plunkett G. III"/>
            <person name="Burland V."/>
            <person name="Mau B."/>
            <person name="Glasner J.D."/>
            <person name="Rose D.J."/>
            <person name="Mayhew G.F."/>
            <person name="Evans P.S."/>
            <person name="Gregor J."/>
            <person name="Kirkpatrick H.A."/>
            <person name="Posfai G."/>
            <person name="Hackett J."/>
            <person name="Klink S."/>
            <person name="Boutin A."/>
            <person name="Shao Y."/>
            <person name="Miller L."/>
            <person name="Grotbeck E.J."/>
            <person name="Davis N.W."/>
            <person name="Lim A."/>
            <person name="Dimalanta E.T."/>
            <person name="Potamousis K."/>
            <person name="Apodaca J."/>
            <person name="Anantharaman T.S."/>
            <person name="Lin J."/>
            <person name="Yen G."/>
            <person name="Schwartz D.C."/>
            <person name="Welch R.A."/>
            <person name="Blattner F.R."/>
        </authorList>
    </citation>
    <scope>NUCLEOTIDE SEQUENCE [LARGE SCALE GENOMIC DNA]</scope>
    <source>
        <strain>O157:H7 / EDL933 / ATCC 700927 / EHEC</strain>
    </source>
</reference>
<reference key="2">
    <citation type="journal article" date="2001" name="DNA Res.">
        <title>Complete genome sequence of enterohemorrhagic Escherichia coli O157:H7 and genomic comparison with a laboratory strain K-12.</title>
        <authorList>
            <person name="Hayashi T."/>
            <person name="Makino K."/>
            <person name="Ohnishi M."/>
            <person name="Kurokawa K."/>
            <person name="Ishii K."/>
            <person name="Yokoyama K."/>
            <person name="Han C.-G."/>
            <person name="Ohtsubo E."/>
            <person name="Nakayama K."/>
            <person name="Murata T."/>
            <person name="Tanaka M."/>
            <person name="Tobe T."/>
            <person name="Iida T."/>
            <person name="Takami H."/>
            <person name="Honda T."/>
            <person name="Sasakawa C."/>
            <person name="Ogasawara N."/>
            <person name="Yasunaga T."/>
            <person name="Kuhara S."/>
            <person name="Shiba T."/>
            <person name="Hattori M."/>
            <person name="Shinagawa H."/>
        </authorList>
    </citation>
    <scope>NUCLEOTIDE SEQUENCE [LARGE SCALE GENOMIC DNA]</scope>
    <source>
        <strain>O157:H7 / Sakai / RIMD 0509952 / EHEC</strain>
    </source>
</reference>
<gene>
    <name type="primary">yjcO</name>
    <name type="ordered locus">Z5677</name>
    <name type="ordered locus">ECs5060</name>
</gene>
<name>YJCO_ECO57</name>
<keyword id="KW-1185">Reference proteome</keyword>
<keyword id="KW-0732">Signal</keyword>
<sequence length="229" mass="25079">MKKIIALMLFLTFFAHANDSEPGSQYLKAAEAGDRRAQYFLADSWFSSGDLSKAEYWAQKAADSGDADACALLAQIKITNPVSLDYPQAKVLAEKAAQAGSKEGEVTLAHILVNTQAGKPDYPKAISLLENASEDLENDSAVDAQMLLGLIYANGVGIKADDDKATWYFKRSSAISRTGYSEYWAGMMFLNGEEGFIEKNKQKALHWLNLSCMEGFDTGCEEFEKLTNG</sequence>
<accession>P0AF57</accession>
<accession>P32713</accession>
<organism>
    <name type="scientific">Escherichia coli O157:H7</name>
    <dbReference type="NCBI Taxonomy" id="83334"/>
    <lineage>
        <taxon>Bacteria</taxon>
        <taxon>Pseudomonadati</taxon>
        <taxon>Pseudomonadota</taxon>
        <taxon>Gammaproteobacteria</taxon>
        <taxon>Enterobacterales</taxon>
        <taxon>Enterobacteriaceae</taxon>
        <taxon>Escherichia</taxon>
    </lineage>
</organism>
<dbReference type="EMBL" id="AE005174">
    <property type="protein sequence ID" value="AAG59276.1"/>
    <property type="molecule type" value="Genomic_DNA"/>
</dbReference>
<dbReference type="EMBL" id="BA000007">
    <property type="protein sequence ID" value="BAB38483.1"/>
    <property type="molecule type" value="Genomic_DNA"/>
</dbReference>
<dbReference type="PIR" id="D91261">
    <property type="entry name" value="D91261"/>
</dbReference>
<dbReference type="PIR" id="H86101">
    <property type="entry name" value="H86101"/>
</dbReference>
<dbReference type="RefSeq" id="NP_313087.1">
    <property type="nucleotide sequence ID" value="NC_002695.1"/>
</dbReference>
<dbReference type="RefSeq" id="WP_000719886.1">
    <property type="nucleotide sequence ID" value="NZ_VOAI01000008.1"/>
</dbReference>
<dbReference type="SMR" id="P0AF57"/>
<dbReference type="STRING" id="155864.Z5677"/>
<dbReference type="DNASU" id="914267"/>
<dbReference type="GeneID" id="914267"/>
<dbReference type="GeneID" id="93777751"/>
<dbReference type="KEGG" id="ece:Z5677"/>
<dbReference type="KEGG" id="ecs:ECs_5060"/>
<dbReference type="PATRIC" id="fig|386585.9.peg.5287"/>
<dbReference type="eggNOG" id="COG0790">
    <property type="taxonomic scope" value="Bacteria"/>
</dbReference>
<dbReference type="HOGENOM" id="CLU_077623_0_0_6"/>
<dbReference type="OMA" id="EYWAGML"/>
<dbReference type="Proteomes" id="UP000000558">
    <property type="component" value="Chromosome"/>
</dbReference>
<dbReference type="Proteomes" id="UP000002519">
    <property type="component" value="Chromosome"/>
</dbReference>
<dbReference type="FunFam" id="1.25.40.740:FF:000001">
    <property type="entry name" value="Sel1 repeat family protein"/>
    <property type="match status" value="1"/>
</dbReference>
<dbReference type="Gene3D" id="1.25.40.740">
    <property type="match status" value="1"/>
</dbReference>
<dbReference type="Gene3D" id="1.25.40.10">
    <property type="entry name" value="Tetratricopeptide repeat domain"/>
    <property type="match status" value="1"/>
</dbReference>
<dbReference type="InterPro" id="IPR052945">
    <property type="entry name" value="Mitotic_Regulator"/>
</dbReference>
<dbReference type="InterPro" id="IPR006597">
    <property type="entry name" value="Sel1-like"/>
</dbReference>
<dbReference type="InterPro" id="IPR011990">
    <property type="entry name" value="TPR-like_helical_dom_sf"/>
</dbReference>
<dbReference type="PANTHER" id="PTHR43628">
    <property type="entry name" value="ACTIVATOR OF C KINASE PROTEIN 1-RELATED"/>
    <property type="match status" value="1"/>
</dbReference>
<dbReference type="PANTHER" id="PTHR43628:SF1">
    <property type="entry name" value="CHITIN SYNTHASE REGULATORY FACTOR 2-RELATED"/>
    <property type="match status" value="1"/>
</dbReference>
<dbReference type="Pfam" id="PF08238">
    <property type="entry name" value="Sel1"/>
    <property type="match status" value="5"/>
</dbReference>
<dbReference type="SMART" id="SM00671">
    <property type="entry name" value="SEL1"/>
    <property type="match status" value="4"/>
</dbReference>
<dbReference type="SUPFAM" id="SSF81901">
    <property type="entry name" value="HCP-like"/>
    <property type="match status" value="2"/>
</dbReference>
<proteinExistence type="inferred from homology"/>
<feature type="signal peptide" evidence="1">
    <location>
        <begin position="1"/>
        <end position="17"/>
    </location>
</feature>
<feature type="chain" id="PRO_0000044593" description="Uncharacterized protein YjcO">
    <location>
        <begin position="18"/>
        <end position="229"/>
    </location>
</feature>
<evidence type="ECO:0000255" key="1"/>